<evidence type="ECO:0000250" key="1">
    <source>
        <dbReference type="UniProtKB" id="Q86QT3"/>
    </source>
</evidence>
<evidence type="ECO:0000269" key="2">
    <source>
    </source>
</evidence>
<evidence type="ECO:0000303" key="3">
    <source>
    </source>
</evidence>
<evidence type="ECO:0000305" key="4"/>
<evidence type="ECO:0000305" key="5">
    <source>
    </source>
</evidence>
<feature type="peptide" id="PRO_0000436541" description="Potassium channel gamma toxin gamma-KTx 1.9" evidence="2">
    <location>
        <begin position="1"/>
        <end position="42"/>
    </location>
</feature>
<feature type="disulfide bond" evidence="1">
    <location>
        <begin position="5"/>
        <end position="23"/>
    </location>
</feature>
<feature type="disulfide bond" evidence="1">
    <location>
        <begin position="11"/>
        <end position="34"/>
    </location>
</feature>
<feature type="disulfide bond" evidence="1">
    <location>
        <begin position="20"/>
        <end position="39"/>
    </location>
</feature>
<feature type="disulfide bond" evidence="1">
    <location>
        <begin position="24"/>
        <end position="41"/>
    </location>
</feature>
<comment type="function">
    <text evidence="2">Blocks human voltage-gated potassium channel Kv11.1/KCNH2/ERG1 (IC(50)=16.9 nM).</text>
</comment>
<comment type="subcellular location">
    <subcellularLocation>
        <location evidence="2">Secreted</location>
    </subcellularLocation>
</comment>
<comment type="tissue specificity">
    <text evidence="5">Expressed by the venom gland.</text>
</comment>
<comment type="domain">
    <text evidence="4">The presence of a 'disulfide through disulfide knot' structurally defines this protein as a knottin.</text>
</comment>
<comment type="mass spectrometry"/>
<comment type="miscellaneous">
    <text evidence="2">Negative results: has no effect on voltage-gated potassium channels Kv1.1/KCNA1, Kv1.2/KCNA2, Kv1.3/KCNA3, Kv10.1/KCNH1/EAG1 and Shaker IR (with inactivation domain removed) and on intermediate conductance calcium-activated potassium channel KCa3.1/KCNN4.</text>
</comment>
<comment type="similarity">
    <text evidence="4">Belongs to the ergtoxin family. Gamma-KTx 1 subfamily.</text>
</comment>
<organism>
    <name type="scientific">Centruroides tecomanus</name>
    <name type="common">Scorpion</name>
    <name type="synonym">Centruroides limpidus tecomanus</name>
    <dbReference type="NCBI Taxonomy" id="1028682"/>
    <lineage>
        <taxon>Eukaryota</taxon>
        <taxon>Metazoa</taxon>
        <taxon>Ecdysozoa</taxon>
        <taxon>Arthropoda</taxon>
        <taxon>Chelicerata</taxon>
        <taxon>Arachnida</taxon>
        <taxon>Scorpiones</taxon>
        <taxon>Buthida</taxon>
        <taxon>Buthoidea</taxon>
        <taxon>Buthidae</taxon>
        <taxon>Centruroides</taxon>
    </lineage>
</organism>
<dbReference type="SMR" id="C0HJW3"/>
<dbReference type="GO" id="GO:0005576">
    <property type="term" value="C:extracellular region"/>
    <property type="evidence" value="ECO:0007669"/>
    <property type="project" value="UniProtKB-SubCell"/>
</dbReference>
<dbReference type="GO" id="GO:0019870">
    <property type="term" value="F:potassium channel inhibitor activity"/>
    <property type="evidence" value="ECO:0007669"/>
    <property type="project" value="InterPro"/>
</dbReference>
<dbReference type="GO" id="GO:0090729">
    <property type="term" value="F:toxin activity"/>
    <property type="evidence" value="ECO:0007669"/>
    <property type="project" value="UniProtKB-KW"/>
</dbReference>
<dbReference type="Gene3D" id="3.30.30.10">
    <property type="entry name" value="Knottin, scorpion toxin-like"/>
    <property type="match status" value="1"/>
</dbReference>
<dbReference type="InterPro" id="IPR012622">
    <property type="entry name" value="Ergtoxin"/>
</dbReference>
<dbReference type="InterPro" id="IPR036574">
    <property type="entry name" value="Scorpion_toxin-like_sf"/>
</dbReference>
<dbReference type="Pfam" id="PF08086">
    <property type="entry name" value="Toxin_17"/>
    <property type="match status" value="1"/>
</dbReference>
<dbReference type="SUPFAM" id="SSF57095">
    <property type="entry name" value="Scorpion toxin-like"/>
    <property type="match status" value="1"/>
</dbReference>
<dbReference type="PROSITE" id="PS60026">
    <property type="entry name" value="ERGTX"/>
    <property type="match status" value="1"/>
</dbReference>
<proteinExistence type="evidence at protein level"/>
<name>KGX19_CENTE</name>
<reference key="1">
    <citation type="journal article" date="2016" name="Toxicon">
        <title>Isolation, chemical and functional characterization of several new K(+)-channel blocking peptides from the venom of the scorpion Centruroides tecomanus.</title>
        <authorList>
            <person name="Olamendi-Portugal T."/>
            <person name="Bartok A."/>
            <person name="Zamudio-Zuniga F."/>
            <person name="Balajthy A."/>
            <person name="Becerril B."/>
            <person name="Panyi G."/>
            <person name="Possani L.D."/>
        </authorList>
    </citation>
    <scope>PROTEIN SEQUENCE</scope>
    <scope>FUNCTION</scope>
    <scope>SUBCELLULAR LOCATION</scope>
    <scope>MASS SPECTROMETRY</scope>
    <source>
        <tissue>Venom</tissue>
    </source>
</reference>
<accession>C0HJW3</accession>
<protein>
    <recommendedName>
        <fullName evidence="3">Potassium channel gamma toxin gamma-KTx 1.9</fullName>
    </recommendedName>
    <alternativeName>
        <fullName evidence="3">Toxin II.10.9</fullName>
    </alternativeName>
</protein>
<keyword id="KW-0903">Direct protein sequencing</keyword>
<keyword id="KW-1015">Disulfide bond</keyword>
<keyword id="KW-0872">Ion channel impairing toxin</keyword>
<keyword id="KW-0960">Knottin</keyword>
<keyword id="KW-0528">Neurotoxin</keyword>
<keyword id="KW-0632">Potassium channel impairing toxin</keyword>
<keyword id="KW-0964">Secreted</keyword>
<keyword id="KW-0800">Toxin</keyword>
<keyword id="KW-1220">Voltage-gated potassium channel impairing toxin</keyword>
<sequence>DRDSCIDKSRCSKYGYYQECQDCCKKAGHNRGTCMFFKCKCA</sequence>